<proteinExistence type="inferred from homology"/>
<reference key="1">
    <citation type="journal article" date="2007" name="Mol. Genet. Genomics">
        <title>Chloroplast genomes of the diatoms Phaeodactylum tricornutum and Thalassiosira pseudonana: comparison with other plastid genomes of the red lineage.</title>
        <authorList>
            <person name="Oudot-Le Secq M.-P."/>
            <person name="Grimwood J."/>
            <person name="Shapiro H."/>
            <person name="Armbrust E.V."/>
            <person name="Bowler C."/>
            <person name="Green B.R."/>
        </authorList>
    </citation>
    <scope>NUCLEOTIDE SEQUENCE [LARGE SCALE GENOMIC DNA]</scope>
    <source>
        <strain>CCMP1335 / NEPCC58 / CCAP 1085/12</strain>
    </source>
</reference>
<dbReference type="EMBL" id="EF067921">
    <property type="protein sequence ID" value="ABK20827.1"/>
    <property type="molecule type" value="Genomic_DNA"/>
</dbReference>
<dbReference type="RefSeq" id="YP_874604.1">
    <property type="nucleotide sequence ID" value="NC_008589.1"/>
</dbReference>
<dbReference type="SMR" id="A0T0Z2"/>
<dbReference type="STRING" id="35128.A0T0Z2"/>
<dbReference type="GeneID" id="4524767"/>
<dbReference type="InParanoid" id="A0T0Z2"/>
<dbReference type="GO" id="GO:0009507">
    <property type="term" value="C:chloroplast"/>
    <property type="evidence" value="ECO:0007669"/>
    <property type="project" value="UniProtKB-SubCell"/>
</dbReference>
<dbReference type="GO" id="GO:0005739">
    <property type="term" value="C:mitochondrion"/>
    <property type="evidence" value="ECO:0000318"/>
    <property type="project" value="GO_Central"/>
</dbReference>
<dbReference type="GO" id="GO:0015935">
    <property type="term" value="C:small ribosomal subunit"/>
    <property type="evidence" value="ECO:0000318"/>
    <property type="project" value="GO_Central"/>
</dbReference>
<dbReference type="GO" id="GO:0019843">
    <property type="term" value="F:rRNA binding"/>
    <property type="evidence" value="ECO:0007669"/>
    <property type="project" value="UniProtKB-UniRule"/>
</dbReference>
<dbReference type="GO" id="GO:0003735">
    <property type="term" value="F:structural constituent of ribosome"/>
    <property type="evidence" value="ECO:0007669"/>
    <property type="project" value="InterPro"/>
</dbReference>
<dbReference type="GO" id="GO:0006412">
    <property type="term" value="P:translation"/>
    <property type="evidence" value="ECO:0007669"/>
    <property type="project" value="UniProtKB-UniRule"/>
</dbReference>
<dbReference type="FunFam" id="1.10.8.50:FF:000001">
    <property type="entry name" value="30S ribosomal protein S13"/>
    <property type="match status" value="1"/>
</dbReference>
<dbReference type="FunFam" id="4.10.910.10:FF:000005">
    <property type="entry name" value="30S ribosomal protein S13, chloroplastic"/>
    <property type="match status" value="1"/>
</dbReference>
<dbReference type="Gene3D" id="1.10.8.50">
    <property type="match status" value="1"/>
</dbReference>
<dbReference type="Gene3D" id="4.10.910.10">
    <property type="entry name" value="30s ribosomal protein s13, domain 2"/>
    <property type="match status" value="1"/>
</dbReference>
<dbReference type="HAMAP" id="MF_01315">
    <property type="entry name" value="Ribosomal_uS13"/>
    <property type="match status" value="1"/>
</dbReference>
<dbReference type="InterPro" id="IPR027437">
    <property type="entry name" value="Rbsml_uS13_C"/>
</dbReference>
<dbReference type="InterPro" id="IPR001892">
    <property type="entry name" value="Ribosomal_uS13"/>
</dbReference>
<dbReference type="InterPro" id="IPR010979">
    <property type="entry name" value="Ribosomal_uS13-like_H2TH"/>
</dbReference>
<dbReference type="InterPro" id="IPR019980">
    <property type="entry name" value="Ribosomal_uS13_bac-type"/>
</dbReference>
<dbReference type="InterPro" id="IPR018269">
    <property type="entry name" value="Ribosomal_uS13_CS"/>
</dbReference>
<dbReference type="NCBIfam" id="TIGR03631">
    <property type="entry name" value="uS13_bact"/>
    <property type="match status" value="1"/>
</dbReference>
<dbReference type="PANTHER" id="PTHR10871">
    <property type="entry name" value="30S RIBOSOMAL PROTEIN S13/40S RIBOSOMAL PROTEIN S18"/>
    <property type="match status" value="1"/>
</dbReference>
<dbReference type="PANTHER" id="PTHR10871:SF1">
    <property type="entry name" value="SMALL RIBOSOMAL SUBUNIT PROTEIN US13M"/>
    <property type="match status" value="1"/>
</dbReference>
<dbReference type="Pfam" id="PF00416">
    <property type="entry name" value="Ribosomal_S13"/>
    <property type="match status" value="1"/>
</dbReference>
<dbReference type="PIRSF" id="PIRSF002134">
    <property type="entry name" value="Ribosomal_S13"/>
    <property type="match status" value="1"/>
</dbReference>
<dbReference type="SUPFAM" id="SSF46946">
    <property type="entry name" value="S13-like H2TH domain"/>
    <property type="match status" value="1"/>
</dbReference>
<dbReference type="PROSITE" id="PS00646">
    <property type="entry name" value="RIBOSOMAL_S13_1"/>
    <property type="match status" value="1"/>
</dbReference>
<dbReference type="PROSITE" id="PS50159">
    <property type="entry name" value="RIBOSOMAL_S13_2"/>
    <property type="match status" value="1"/>
</dbReference>
<name>RR13_THAPS</name>
<protein>
    <recommendedName>
        <fullName evidence="1">Small ribosomal subunit protein uS13c</fullName>
    </recommendedName>
    <alternativeName>
        <fullName evidence="3">30S ribosomal protein S13, chloroplastic</fullName>
    </alternativeName>
</protein>
<keyword id="KW-0150">Chloroplast</keyword>
<keyword id="KW-0934">Plastid</keyword>
<keyword id="KW-0687">Ribonucleoprotein</keyword>
<keyword id="KW-0689">Ribosomal protein</keyword>
<keyword id="KW-0694">RNA-binding</keyword>
<keyword id="KW-0699">rRNA-binding</keyword>
<feature type="chain" id="PRO_0000276665" description="Small ribosomal subunit protein uS13c">
    <location>
        <begin position="1"/>
        <end position="123"/>
    </location>
</feature>
<feature type="region of interest" description="Disordered" evidence="2">
    <location>
        <begin position="90"/>
        <end position="123"/>
    </location>
</feature>
<feature type="compositionally biased region" description="Basic residues" evidence="2">
    <location>
        <begin position="102"/>
        <end position="123"/>
    </location>
</feature>
<evidence type="ECO:0000255" key="1">
    <source>
        <dbReference type="HAMAP-Rule" id="MF_01315"/>
    </source>
</evidence>
<evidence type="ECO:0000256" key="2">
    <source>
        <dbReference type="SAM" id="MobiDB-lite"/>
    </source>
</evidence>
<evidence type="ECO:0000305" key="3"/>
<accession>A0T0Z2</accession>
<gene>
    <name evidence="1" type="primary">rps13</name>
</gene>
<sequence length="123" mass="14048">MVRLLGIDLPRNKRIAYALTYIHGIGLTSAQKFIELAEISADTRTDDITTEQAVVLRNLLENCELNLEGDLRRFNGLNIKRLNEINCHRGKRHRNSLPVRGQRTRTNARSRRGAKKTVTGKKK</sequence>
<comment type="function">
    <text evidence="1">Located at the top of the head of the 30S subunit, it contacts several helices of the 16S rRNA.</text>
</comment>
<comment type="subunit">
    <text>Part of the 30S ribosomal subunit.</text>
</comment>
<comment type="subcellular location">
    <subcellularLocation>
        <location>Plastid</location>
        <location>Chloroplast</location>
    </subcellularLocation>
</comment>
<comment type="similarity">
    <text evidence="1">Belongs to the universal ribosomal protein uS13 family.</text>
</comment>
<geneLocation type="chloroplast"/>
<organism>
    <name type="scientific">Thalassiosira pseudonana</name>
    <name type="common">Marine diatom</name>
    <name type="synonym">Cyclotella nana</name>
    <dbReference type="NCBI Taxonomy" id="35128"/>
    <lineage>
        <taxon>Eukaryota</taxon>
        <taxon>Sar</taxon>
        <taxon>Stramenopiles</taxon>
        <taxon>Ochrophyta</taxon>
        <taxon>Bacillariophyta</taxon>
        <taxon>Coscinodiscophyceae</taxon>
        <taxon>Thalassiosirophycidae</taxon>
        <taxon>Thalassiosirales</taxon>
        <taxon>Thalassiosiraceae</taxon>
        <taxon>Thalassiosira</taxon>
    </lineage>
</organism>